<dbReference type="EC" id="4.2.1.113" evidence="1"/>
<dbReference type="EMBL" id="CP000034">
    <property type="protein sequence ID" value="ABB62528.1"/>
    <property type="molecule type" value="Genomic_DNA"/>
</dbReference>
<dbReference type="RefSeq" id="WP_001255628.1">
    <property type="nucleotide sequence ID" value="NC_007606.1"/>
</dbReference>
<dbReference type="RefSeq" id="YP_404019.1">
    <property type="nucleotide sequence ID" value="NC_007606.1"/>
</dbReference>
<dbReference type="SMR" id="Q32DS7"/>
<dbReference type="STRING" id="300267.SDY_2457"/>
<dbReference type="EnsemblBacteria" id="ABB62528">
    <property type="protein sequence ID" value="ABB62528"/>
    <property type="gene ID" value="SDY_2457"/>
</dbReference>
<dbReference type="KEGG" id="sdy:SDY_2457"/>
<dbReference type="PATRIC" id="fig|300267.13.peg.2964"/>
<dbReference type="HOGENOM" id="CLU_030273_0_1_6"/>
<dbReference type="UniPathway" id="UPA00079"/>
<dbReference type="UniPathway" id="UPA01057">
    <property type="reaction ID" value="UER00165"/>
</dbReference>
<dbReference type="Proteomes" id="UP000002716">
    <property type="component" value="Chromosome"/>
</dbReference>
<dbReference type="GO" id="GO:0000287">
    <property type="term" value="F:magnesium ion binding"/>
    <property type="evidence" value="ECO:0007669"/>
    <property type="project" value="UniProtKB-UniRule"/>
</dbReference>
<dbReference type="GO" id="GO:0043748">
    <property type="term" value="F:O-succinylbenzoate synthase activity"/>
    <property type="evidence" value="ECO:0007669"/>
    <property type="project" value="UniProtKB-EC"/>
</dbReference>
<dbReference type="GO" id="GO:0009234">
    <property type="term" value="P:menaquinone biosynthetic process"/>
    <property type="evidence" value="ECO:0007669"/>
    <property type="project" value="UniProtKB-UniRule"/>
</dbReference>
<dbReference type="CDD" id="cd03320">
    <property type="entry name" value="OSBS"/>
    <property type="match status" value="1"/>
</dbReference>
<dbReference type="FunFam" id="3.20.20.120:FF:000006">
    <property type="entry name" value="o-succinylbenzoate synthase"/>
    <property type="match status" value="1"/>
</dbReference>
<dbReference type="FunFam" id="3.30.390.10:FF:000005">
    <property type="entry name" value="o-succinylbenzoate synthase"/>
    <property type="match status" value="1"/>
</dbReference>
<dbReference type="Gene3D" id="3.20.20.120">
    <property type="entry name" value="Enolase-like C-terminal domain"/>
    <property type="match status" value="1"/>
</dbReference>
<dbReference type="Gene3D" id="3.30.390.10">
    <property type="entry name" value="Enolase-like, N-terminal domain"/>
    <property type="match status" value="1"/>
</dbReference>
<dbReference type="HAMAP" id="MF_00470">
    <property type="entry name" value="MenC_1"/>
    <property type="match status" value="1"/>
</dbReference>
<dbReference type="InterPro" id="IPR036849">
    <property type="entry name" value="Enolase-like_C_sf"/>
</dbReference>
<dbReference type="InterPro" id="IPR029017">
    <property type="entry name" value="Enolase-like_N"/>
</dbReference>
<dbReference type="InterPro" id="IPR029065">
    <property type="entry name" value="Enolase_C-like"/>
</dbReference>
<dbReference type="InterPro" id="IPR013342">
    <property type="entry name" value="Mandelate_racemase_C"/>
</dbReference>
<dbReference type="InterPro" id="IPR010196">
    <property type="entry name" value="OSB_synthase_MenC1"/>
</dbReference>
<dbReference type="InterPro" id="IPR041338">
    <property type="entry name" value="OSBS_N"/>
</dbReference>
<dbReference type="NCBIfam" id="TIGR01927">
    <property type="entry name" value="menC_gam_Gplu"/>
    <property type="match status" value="1"/>
</dbReference>
<dbReference type="NCBIfam" id="NF003473">
    <property type="entry name" value="PRK05105.1"/>
    <property type="match status" value="1"/>
</dbReference>
<dbReference type="PANTHER" id="PTHR48073:SF2">
    <property type="entry name" value="O-SUCCINYLBENZOATE SYNTHASE"/>
    <property type="match status" value="1"/>
</dbReference>
<dbReference type="PANTHER" id="PTHR48073">
    <property type="entry name" value="O-SUCCINYLBENZOATE SYNTHASE-RELATED"/>
    <property type="match status" value="1"/>
</dbReference>
<dbReference type="Pfam" id="PF21508">
    <property type="entry name" value="MenC_N"/>
    <property type="match status" value="1"/>
</dbReference>
<dbReference type="Pfam" id="PF13378">
    <property type="entry name" value="MR_MLE_C"/>
    <property type="match status" value="1"/>
</dbReference>
<dbReference type="SFLD" id="SFLDG00180">
    <property type="entry name" value="muconate_cycloisomerase"/>
    <property type="match status" value="1"/>
</dbReference>
<dbReference type="SFLD" id="SFLDF00009">
    <property type="entry name" value="o-succinylbenzoate_synthase"/>
    <property type="match status" value="1"/>
</dbReference>
<dbReference type="SMART" id="SM00922">
    <property type="entry name" value="MR_MLE"/>
    <property type="match status" value="1"/>
</dbReference>
<dbReference type="SUPFAM" id="SSF51604">
    <property type="entry name" value="Enolase C-terminal domain-like"/>
    <property type="match status" value="1"/>
</dbReference>
<dbReference type="SUPFAM" id="SSF54826">
    <property type="entry name" value="Enolase N-terminal domain-like"/>
    <property type="match status" value="1"/>
</dbReference>
<keyword id="KW-0456">Lyase</keyword>
<keyword id="KW-0460">Magnesium</keyword>
<keyword id="KW-0474">Menaquinone biosynthesis</keyword>
<keyword id="KW-0479">Metal-binding</keyword>
<keyword id="KW-1185">Reference proteome</keyword>
<comment type="function">
    <text evidence="1">Converts 2-succinyl-6-hydroxy-2,4-cyclohexadiene-1-carboxylate (SHCHC) to 2-succinylbenzoate (OSB).</text>
</comment>
<comment type="catalytic activity">
    <reaction evidence="1">
        <text>(1R,6R)-6-hydroxy-2-succinyl-cyclohexa-2,4-diene-1-carboxylate = 2-succinylbenzoate + H2O</text>
        <dbReference type="Rhea" id="RHEA:10196"/>
        <dbReference type="ChEBI" id="CHEBI:15377"/>
        <dbReference type="ChEBI" id="CHEBI:18325"/>
        <dbReference type="ChEBI" id="CHEBI:58689"/>
        <dbReference type="EC" id="4.2.1.113"/>
    </reaction>
</comment>
<comment type="cofactor">
    <cofactor evidence="1">
        <name>a divalent metal cation</name>
        <dbReference type="ChEBI" id="CHEBI:60240"/>
    </cofactor>
</comment>
<comment type="pathway">
    <text evidence="1">Quinol/quinone metabolism; 1,4-dihydroxy-2-naphthoate biosynthesis; 1,4-dihydroxy-2-naphthoate from chorismate: step 4/7.</text>
</comment>
<comment type="pathway">
    <text evidence="1">Quinol/quinone metabolism; menaquinone biosynthesis.</text>
</comment>
<comment type="similarity">
    <text evidence="1">Belongs to the mandelate racemase/muconate lactonizing enzyme family. MenC type 1 subfamily.</text>
</comment>
<reference key="1">
    <citation type="journal article" date="2005" name="Nucleic Acids Res.">
        <title>Genome dynamics and diversity of Shigella species, the etiologic agents of bacillary dysentery.</title>
        <authorList>
            <person name="Yang F."/>
            <person name="Yang J."/>
            <person name="Zhang X."/>
            <person name="Chen L."/>
            <person name="Jiang Y."/>
            <person name="Yan Y."/>
            <person name="Tang X."/>
            <person name="Wang J."/>
            <person name="Xiong Z."/>
            <person name="Dong J."/>
            <person name="Xue Y."/>
            <person name="Zhu Y."/>
            <person name="Xu X."/>
            <person name="Sun L."/>
            <person name="Chen S."/>
            <person name="Nie H."/>
            <person name="Peng J."/>
            <person name="Xu J."/>
            <person name="Wang Y."/>
            <person name="Yuan Z."/>
            <person name="Wen Y."/>
            <person name="Yao Z."/>
            <person name="Shen Y."/>
            <person name="Qiang B."/>
            <person name="Hou Y."/>
            <person name="Yu J."/>
            <person name="Jin Q."/>
        </authorList>
    </citation>
    <scope>NUCLEOTIDE SEQUENCE [LARGE SCALE GENOMIC DNA]</scope>
    <source>
        <strain>Sd197</strain>
    </source>
</reference>
<accession>Q32DS7</accession>
<feature type="chain" id="PRO_1000013812" description="o-succinylbenzoate synthase">
    <location>
        <begin position="1"/>
        <end position="320"/>
    </location>
</feature>
<feature type="active site" description="Proton donor" evidence="1">
    <location>
        <position position="133"/>
    </location>
</feature>
<feature type="active site" description="Proton acceptor" evidence="1">
    <location>
        <position position="235"/>
    </location>
</feature>
<feature type="binding site" evidence="1">
    <location>
        <position position="161"/>
    </location>
    <ligand>
        <name>Mg(2+)</name>
        <dbReference type="ChEBI" id="CHEBI:18420"/>
    </ligand>
</feature>
<feature type="binding site" evidence="1">
    <location>
        <position position="190"/>
    </location>
    <ligand>
        <name>Mg(2+)</name>
        <dbReference type="ChEBI" id="CHEBI:18420"/>
    </ligand>
</feature>
<feature type="binding site" evidence="1">
    <location>
        <position position="213"/>
    </location>
    <ligand>
        <name>Mg(2+)</name>
        <dbReference type="ChEBI" id="CHEBI:18420"/>
    </ligand>
</feature>
<protein>
    <recommendedName>
        <fullName evidence="1">o-succinylbenzoate synthase</fullName>
        <shortName evidence="1">OSB synthase</shortName>
        <shortName evidence="1">OSBS</shortName>
        <ecNumber evidence="1">4.2.1.113</ecNumber>
    </recommendedName>
    <alternativeName>
        <fullName evidence="1">4-(2'-carboxyphenyl)-4-oxybutyric acid synthase</fullName>
    </alternativeName>
    <alternativeName>
        <fullName evidence="1">o-succinylbenzoic acid synthase</fullName>
    </alternativeName>
</protein>
<gene>
    <name evidence="1" type="primary">menC</name>
    <name type="ordered locus">SDY_2457</name>
</gene>
<organism>
    <name type="scientific">Shigella dysenteriae serotype 1 (strain Sd197)</name>
    <dbReference type="NCBI Taxonomy" id="300267"/>
    <lineage>
        <taxon>Bacteria</taxon>
        <taxon>Pseudomonadati</taxon>
        <taxon>Pseudomonadota</taxon>
        <taxon>Gammaproteobacteria</taxon>
        <taxon>Enterobacterales</taxon>
        <taxon>Enterobacteriaceae</taxon>
        <taxon>Shigella</taxon>
    </lineage>
</organism>
<evidence type="ECO:0000255" key="1">
    <source>
        <dbReference type="HAMAP-Rule" id="MF_00470"/>
    </source>
</evidence>
<sequence length="320" mass="35477">MRSAQVYRWQIPMDAGVVLRDRRLKTRDGLYVCLREGEREGWGEISPLPGFSQETWEEAQSVLLAWVNNWLAGDCELPQMPSVAFGVSCALAELTDTLPQAANYRAAPLCNGDPDDLILKLADMPGEKVAKVKVGLYEAVRDGMVVNLLLEAIPDLHLRLDANRAWTPLKGQQFAKYVNPDYRDRIAFLEEPCKTRDDSRAFARETGIAIAWDESLREPDFAFVAEEGVRAVVIKPTLTGSLEKVREQVQAAHALGLTAVISSSIESSLGLTQLARIAAWLTPDTIPGLDTLDLMQAQQVRRWPGSTLPVVEVDALERLL</sequence>
<proteinExistence type="inferred from homology"/>
<name>MENC_SHIDS</name>